<name>PUR1_PASMU</name>
<organism>
    <name type="scientific">Pasteurella multocida (strain Pm70)</name>
    <dbReference type="NCBI Taxonomy" id="272843"/>
    <lineage>
        <taxon>Bacteria</taxon>
        <taxon>Pseudomonadati</taxon>
        <taxon>Pseudomonadota</taxon>
        <taxon>Gammaproteobacteria</taxon>
        <taxon>Pasteurellales</taxon>
        <taxon>Pasteurellaceae</taxon>
        <taxon>Pasteurella</taxon>
    </lineage>
</organism>
<comment type="function">
    <text evidence="2">Catalyzes the formation of phosphoribosylamine from phosphoribosylpyrophosphate (PRPP) and glutamine.</text>
</comment>
<comment type="catalytic activity">
    <reaction evidence="2">
        <text>5-phospho-beta-D-ribosylamine + L-glutamate + diphosphate = 5-phospho-alpha-D-ribose 1-diphosphate + L-glutamine + H2O</text>
        <dbReference type="Rhea" id="RHEA:14905"/>
        <dbReference type="ChEBI" id="CHEBI:15377"/>
        <dbReference type="ChEBI" id="CHEBI:29985"/>
        <dbReference type="ChEBI" id="CHEBI:33019"/>
        <dbReference type="ChEBI" id="CHEBI:58017"/>
        <dbReference type="ChEBI" id="CHEBI:58359"/>
        <dbReference type="ChEBI" id="CHEBI:58681"/>
        <dbReference type="EC" id="2.4.2.14"/>
    </reaction>
</comment>
<comment type="cofactor">
    <cofactor evidence="2">
        <name>Mg(2+)</name>
        <dbReference type="ChEBI" id="CHEBI:18420"/>
    </cofactor>
    <text evidence="2">Binds 1 Mg(2+) ion per subunit.</text>
</comment>
<comment type="pathway">
    <text evidence="2">Purine metabolism; IMP biosynthesis via de novo pathway; N(1)-(5-phospho-D-ribosyl)glycinamide from 5-phospho-alpha-D-ribose 1-diphosphate: step 1/2.</text>
</comment>
<comment type="similarity">
    <text evidence="2">In the C-terminal section; belongs to the purine/pyrimidine phosphoribosyltransferase family.</text>
</comment>
<proteinExistence type="inferred from homology"/>
<feature type="initiator methionine" description="Removed" evidence="1">
    <location>
        <position position="1"/>
    </location>
</feature>
<feature type="chain" id="PRO_0000139640" description="Amidophosphoribosyltransferase">
    <location>
        <begin position="2"/>
        <end position="504"/>
    </location>
</feature>
<feature type="domain" description="Glutamine amidotransferase type-2" evidence="2">
    <location>
        <begin position="2"/>
        <end position="235"/>
    </location>
</feature>
<feature type="active site" description="Nucleophile" evidence="2">
    <location>
        <position position="2"/>
    </location>
</feature>
<feature type="binding site" evidence="2">
    <location>
        <position position="305"/>
    </location>
    <ligand>
        <name>Mg(2+)</name>
        <dbReference type="ChEBI" id="CHEBI:18420"/>
    </ligand>
</feature>
<feature type="binding site" evidence="2">
    <location>
        <position position="367"/>
    </location>
    <ligand>
        <name>Mg(2+)</name>
        <dbReference type="ChEBI" id="CHEBI:18420"/>
    </ligand>
</feature>
<feature type="binding site" evidence="2">
    <location>
        <position position="368"/>
    </location>
    <ligand>
        <name>Mg(2+)</name>
        <dbReference type="ChEBI" id="CHEBI:18420"/>
    </ligand>
</feature>
<feature type="sequence conflict" description="In Ref. 1; AAF68406." evidence="3" ref="1">
    <original>R</original>
    <variation>L</variation>
    <location>
        <position position="118"/>
    </location>
</feature>
<feature type="sequence conflict" description="In Ref. 1; AAF68406." evidence="3" ref="1">
    <original>K</original>
    <variation>N</variation>
    <location>
        <position position="428"/>
    </location>
</feature>
<protein>
    <recommendedName>
        <fullName evidence="2">Amidophosphoribosyltransferase</fullName>
        <shortName evidence="2">ATase</shortName>
        <ecNumber evidence="2">2.4.2.14</ecNumber>
    </recommendedName>
    <alternativeName>
        <fullName evidence="2">Glutamine phosphoribosylpyrophosphate amidotransferase</fullName>
        <shortName evidence="2">GPATase</shortName>
    </alternativeName>
</protein>
<accession>Q9L6B8</accession>
<gene>
    <name evidence="2" type="primary">purF</name>
    <name type="ordered locus">PM0701</name>
</gene>
<sequence length="504" mass="56327">MCGIVGIVSQSPVNQSIYDALTLLQHRGQDAAGIVTVDDENRFRLRKANGLVSDVFEQVHMLRLQGNAGIGHVRYPTAGSSSVSEAQPFYVNSPYGLTLVHNGNLTNSSELKEKLFRRARRHVNTNSDSELLLNILANHLDHFEKYQLDPQDVFSAVKQTHQDIRGAYACIAMIIGHGMVAFRDPNGIRPLVLGKREENGKTEYMFASESIALDTVGFEFVRDVQPGEAIYVTFEGEMYAQQCADKPTLTPCIFEYVYFARPDSCIDGVSVYAARVHMGQRLGEKIAREWADVDDIDVVIPVPETSNDIALRIARVLNKPYRQGFVKNRYVGRTFIMPGQALRVSSVRRKLNTIASEFKDKNVLLVDDSIVRGTTSEQIVEMARAAGAKKIYFASAAPEIRYPNVYGIDMPTKNELIAYGRDVDEIAKLIGVDKLIFQDLDALTGSVQQENPSIQDFDCSVFTGVYVTGDITPEYLDNIAEQRNDIAKKKREKDATNLEMHNEK</sequence>
<reference key="1">
    <citation type="journal article" date="2000" name="Microb. Pathog.">
        <title>Identification of Pasteurella multocida virulence genes in a septicemic mouse model using signature-tagged mutagenesis.</title>
        <authorList>
            <person name="Fuller T.E."/>
            <person name="Kennedy M.J."/>
            <person name="Lowery D.E."/>
        </authorList>
    </citation>
    <scope>NUCLEOTIDE SEQUENCE [GENOMIC DNA]</scope>
</reference>
<reference key="2">
    <citation type="journal article" date="2001" name="Proc. Natl. Acad. Sci. U.S.A.">
        <title>Complete genomic sequence of Pasteurella multocida Pm70.</title>
        <authorList>
            <person name="May B.J."/>
            <person name="Zhang Q."/>
            <person name="Li L.L."/>
            <person name="Paustian M.L."/>
            <person name="Whittam T.S."/>
            <person name="Kapur V."/>
        </authorList>
    </citation>
    <scope>NUCLEOTIDE SEQUENCE [LARGE SCALE GENOMIC DNA]</scope>
    <source>
        <strain>Pm70</strain>
    </source>
</reference>
<keyword id="KW-0315">Glutamine amidotransferase</keyword>
<keyword id="KW-0328">Glycosyltransferase</keyword>
<keyword id="KW-0460">Magnesium</keyword>
<keyword id="KW-0479">Metal-binding</keyword>
<keyword id="KW-0658">Purine biosynthesis</keyword>
<keyword id="KW-1185">Reference proteome</keyword>
<keyword id="KW-0808">Transferase</keyword>
<dbReference type="EC" id="2.4.2.14" evidence="2"/>
<dbReference type="EMBL" id="AF237920">
    <property type="protein sequence ID" value="AAF68406.1"/>
    <property type="molecule type" value="Genomic_DNA"/>
</dbReference>
<dbReference type="EMBL" id="AE004439">
    <property type="protein sequence ID" value="AAK02785.1"/>
    <property type="molecule type" value="Genomic_DNA"/>
</dbReference>
<dbReference type="RefSeq" id="WP_010906803.1">
    <property type="nucleotide sequence ID" value="NC_002663.1"/>
</dbReference>
<dbReference type="SMR" id="Q9L6B8"/>
<dbReference type="STRING" id="272843.PM0701"/>
<dbReference type="MEROPS" id="C44.001"/>
<dbReference type="EnsemblBacteria" id="AAK02785">
    <property type="protein sequence ID" value="AAK02785"/>
    <property type="gene ID" value="PM0701"/>
</dbReference>
<dbReference type="KEGG" id="pmu:PM0701"/>
<dbReference type="PATRIC" id="fig|272843.6.peg.709"/>
<dbReference type="HOGENOM" id="CLU_022389_2_1_6"/>
<dbReference type="OrthoDB" id="9801213at2"/>
<dbReference type="UniPathway" id="UPA00074">
    <property type="reaction ID" value="UER00124"/>
</dbReference>
<dbReference type="Proteomes" id="UP000000809">
    <property type="component" value="Chromosome"/>
</dbReference>
<dbReference type="GO" id="GO:0004044">
    <property type="term" value="F:amidophosphoribosyltransferase activity"/>
    <property type="evidence" value="ECO:0007669"/>
    <property type="project" value="UniProtKB-UniRule"/>
</dbReference>
<dbReference type="GO" id="GO:0000287">
    <property type="term" value="F:magnesium ion binding"/>
    <property type="evidence" value="ECO:0007669"/>
    <property type="project" value="UniProtKB-UniRule"/>
</dbReference>
<dbReference type="GO" id="GO:0006189">
    <property type="term" value="P:'de novo' IMP biosynthetic process"/>
    <property type="evidence" value="ECO:0007669"/>
    <property type="project" value="UniProtKB-UniRule"/>
</dbReference>
<dbReference type="GO" id="GO:0009113">
    <property type="term" value="P:purine nucleobase biosynthetic process"/>
    <property type="evidence" value="ECO:0007669"/>
    <property type="project" value="InterPro"/>
</dbReference>
<dbReference type="CDD" id="cd00715">
    <property type="entry name" value="GPATase_N"/>
    <property type="match status" value="1"/>
</dbReference>
<dbReference type="CDD" id="cd06223">
    <property type="entry name" value="PRTases_typeI"/>
    <property type="match status" value="1"/>
</dbReference>
<dbReference type="FunFam" id="3.60.20.10:FF:000011">
    <property type="entry name" value="Amidophosphoribosyltransferase"/>
    <property type="match status" value="1"/>
</dbReference>
<dbReference type="Gene3D" id="3.40.50.2020">
    <property type="match status" value="1"/>
</dbReference>
<dbReference type="Gene3D" id="3.60.20.10">
    <property type="entry name" value="Glutamine Phosphoribosylpyrophosphate, subunit 1, domain 1"/>
    <property type="match status" value="1"/>
</dbReference>
<dbReference type="HAMAP" id="MF_01931">
    <property type="entry name" value="PurF"/>
    <property type="match status" value="1"/>
</dbReference>
<dbReference type="InterPro" id="IPR017932">
    <property type="entry name" value="GATase_2_dom"/>
</dbReference>
<dbReference type="InterPro" id="IPR029055">
    <property type="entry name" value="Ntn_hydrolases_N"/>
</dbReference>
<dbReference type="InterPro" id="IPR000836">
    <property type="entry name" value="PRibTrfase_dom"/>
</dbReference>
<dbReference type="InterPro" id="IPR029057">
    <property type="entry name" value="PRTase-like"/>
</dbReference>
<dbReference type="InterPro" id="IPR005854">
    <property type="entry name" value="PurF"/>
</dbReference>
<dbReference type="InterPro" id="IPR035584">
    <property type="entry name" value="PurF_N"/>
</dbReference>
<dbReference type="NCBIfam" id="TIGR01134">
    <property type="entry name" value="purF"/>
    <property type="match status" value="1"/>
</dbReference>
<dbReference type="PANTHER" id="PTHR11907">
    <property type="entry name" value="AMIDOPHOSPHORIBOSYLTRANSFERASE"/>
    <property type="match status" value="1"/>
</dbReference>
<dbReference type="Pfam" id="PF13522">
    <property type="entry name" value="GATase_6"/>
    <property type="match status" value="1"/>
</dbReference>
<dbReference type="Pfam" id="PF00156">
    <property type="entry name" value="Pribosyltran"/>
    <property type="match status" value="1"/>
</dbReference>
<dbReference type="PIRSF" id="PIRSF000485">
    <property type="entry name" value="Amd_phspho_trans"/>
    <property type="match status" value="1"/>
</dbReference>
<dbReference type="SUPFAM" id="SSF56235">
    <property type="entry name" value="N-terminal nucleophile aminohydrolases (Ntn hydrolases)"/>
    <property type="match status" value="1"/>
</dbReference>
<dbReference type="SUPFAM" id="SSF53271">
    <property type="entry name" value="PRTase-like"/>
    <property type="match status" value="1"/>
</dbReference>
<dbReference type="PROSITE" id="PS51278">
    <property type="entry name" value="GATASE_TYPE_2"/>
    <property type="match status" value="1"/>
</dbReference>
<dbReference type="PROSITE" id="PS00103">
    <property type="entry name" value="PUR_PYR_PR_TRANSFER"/>
    <property type="match status" value="1"/>
</dbReference>
<evidence type="ECO:0000250" key="1"/>
<evidence type="ECO:0000255" key="2">
    <source>
        <dbReference type="HAMAP-Rule" id="MF_01931"/>
    </source>
</evidence>
<evidence type="ECO:0000305" key="3"/>